<organism>
    <name type="scientific">Mannheimia succiniciproducens (strain KCTC 0769BP / MBEL55E)</name>
    <dbReference type="NCBI Taxonomy" id="221988"/>
    <lineage>
        <taxon>Bacteria</taxon>
        <taxon>Pseudomonadati</taxon>
        <taxon>Pseudomonadota</taxon>
        <taxon>Gammaproteobacteria</taxon>
        <taxon>Pasteurellales</taxon>
        <taxon>Pasteurellaceae</taxon>
        <taxon>Basfia</taxon>
    </lineage>
</organism>
<evidence type="ECO:0000255" key="1">
    <source>
        <dbReference type="HAMAP-Rule" id="MF_00364"/>
    </source>
</evidence>
<dbReference type="EC" id="3.2.1.52" evidence="1"/>
<dbReference type="EMBL" id="AE016827">
    <property type="protein sequence ID" value="AAU37003.1"/>
    <property type="molecule type" value="Genomic_DNA"/>
</dbReference>
<dbReference type="RefSeq" id="WP_011199578.1">
    <property type="nucleotide sequence ID" value="NC_006300.1"/>
</dbReference>
<dbReference type="SMR" id="Q65VK7"/>
<dbReference type="STRING" id="221988.MS0396"/>
<dbReference type="CAZy" id="GH3">
    <property type="family name" value="Glycoside Hydrolase Family 3"/>
</dbReference>
<dbReference type="KEGG" id="msu:MS0396"/>
<dbReference type="eggNOG" id="COG1472">
    <property type="taxonomic scope" value="Bacteria"/>
</dbReference>
<dbReference type="HOGENOM" id="CLU_008392_0_0_6"/>
<dbReference type="OrthoDB" id="9786661at2"/>
<dbReference type="UniPathway" id="UPA00544"/>
<dbReference type="Proteomes" id="UP000000607">
    <property type="component" value="Chromosome"/>
</dbReference>
<dbReference type="GO" id="GO:0005737">
    <property type="term" value="C:cytoplasm"/>
    <property type="evidence" value="ECO:0007669"/>
    <property type="project" value="UniProtKB-SubCell"/>
</dbReference>
<dbReference type="GO" id="GO:0004563">
    <property type="term" value="F:beta-N-acetylhexosaminidase activity"/>
    <property type="evidence" value="ECO:0007669"/>
    <property type="project" value="UniProtKB-UniRule"/>
</dbReference>
<dbReference type="GO" id="GO:0005975">
    <property type="term" value="P:carbohydrate metabolic process"/>
    <property type="evidence" value="ECO:0007669"/>
    <property type="project" value="InterPro"/>
</dbReference>
<dbReference type="GO" id="GO:0051301">
    <property type="term" value="P:cell division"/>
    <property type="evidence" value="ECO:0007669"/>
    <property type="project" value="UniProtKB-KW"/>
</dbReference>
<dbReference type="GO" id="GO:0071555">
    <property type="term" value="P:cell wall organization"/>
    <property type="evidence" value="ECO:0007669"/>
    <property type="project" value="UniProtKB-KW"/>
</dbReference>
<dbReference type="GO" id="GO:0009252">
    <property type="term" value="P:peptidoglycan biosynthetic process"/>
    <property type="evidence" value="ECO:0007669"/>
    <property type="project" value="UniProtKB-KW"/>
</dbReference>
<dbReference type="GO" id="GO:0009254">
    <property type="term" value="P:peptidoglycan turnover"/>
    <property type="evidence" value="ECO:0007669"/>
    <property type="project" value="UniProtKB-UniRule"/>
</dbReference>
<dbReference type="GO" id="GO:0008360">
    <property type="term" value="P:regulation of cell shape"/>
    <property type="evidence" value="ECO:0007669"/>
    <property type="project" value="UniProtKB-KW"/>
</dbReference>
<dbReference type="FunFam" id="3.20.20.300:FF:000001">
    <property type="entry name" value="Beta-hexosaminidase"/>
    <property type="match status" value="1"/>
</dbReference>
<dbReference type="Gene3D" id="3.20.20.300">
    <property type="entry name" value="Glycoside hydrolase, family 3, N-terminal domain"/>
    <property type="match status" value="1"/>
</dbReference>
<dbReference type="HAMAP" id="MF_00364">
    <property type="entry name" value="NagZ"/>
    <property type="match status" value="1"/>
</dbReference>
<dbReference type="InterPro" id="IPR022956">
    <property type="entry name" value="Beta_hexosaminidase_bac"/>
</dbReference>
<dbReference type="InterPro" id="IPR019800">
    <property type="entry name" value="Glyco_hydro_3_AS"/>
</dbReference>
<dbReference type="InterPro" id="IPR001764">
    <property type="entry name" value="Glyco_hydro_3_N"/>
</dbReference>
<dbReference type="InterPro" id="IPR036962">
    <property type="entry name" value="Glyco_hydro_3_N_sf"/>
</dbReference>
<dbReference type="InterPro" id="IPR017853">
    <property type="entry name" value="Glycoside_hydrolase_SF"/>
</dbReference>
<dbReference type="InterPro" id="IPR050226">
    <property type="entry name" value="NagZ_Beta-hexosaminidase"/>
</dbReference>
<dbReference type="NCBIfam" id="NF003740">
    <property type="entry name" value="PRK05337.1"/>
    <property type="match status" value="1"/>
</dbReference>
<dbReference type="PANTHER" id="PTHR30480:SF13">
    <property type="entry name" value="BETA-HEXOSAMINIDASE"/>
    <property type="match status" value="1"/>
</dbReference>
<dbReference type="PANTHER" id="PTHR30480">
    <property type="entry name" value="BETA-HEXOSAMINIDASE-RELATED"/>
    <property type="match status" value="1"/>
</dbReference>
<dbReference type="Pfam" id="PF00933">
    <property type="entry name" value="Glyco_hydro_3"/>
    <property type="match status" value="1"/>
</dbReference>
<dbReference type="SUPFAM" id="SSF51445">
    <property type="entry name" value="(Trans)glycosidases"/>
    <property type="match status" value="1"/>
</dbReference>
<dbReference type="PROSITE" id="PS00775">
    <property type="entry name" value="GLYCOSYL_HYDROL_F3"/>
    <property type="match status" value="1"/>
</dbReference>
<feature type="chain" id="PRO_0000234915" description="Beta-hexosaminidase">
    <location>
        <begin position="1"/>
        <end position="347"/>
    </location>
</feature>
<feature type="active site" description="Proton donor/acceptor" evidence="1">
    <location>
        <position position="177"/>
    </location>
</feature>
<feature type="active site" description="Nucleophile" evidence="1">
    <location>
        <position position="249"/>
    </location>
</feature>
<feature type="binding site" evidence="1">
    <location>
        <position position="62"/>
    </location>
    <ligand>
        <name>substrate</name>
    </ligand>
</feature>
<feature type="binding site" evidence="1">
    <location>
        <position position="70"/>
    </location>
    <ligand>
        <name>substrate</name>
    </ligand>
</feature>
<feature type="binding site" evidence="1">
    <location>
        <position position="134"/>
    </location>
    <ligand>
        <name>substrate</name>
    </ligand>
</feature>
<feature type="binding site" evidence="1">
    <location>
        <begin position="164"/>
        <end position="165"/>
    </location>
    <ligand>
        <name>substrate</name>
    </ligand>
</feature>
<feature type="site" description="Important for catalytic activity" evidence="1">
    <location>
        <position position="175"/>
    </location>
</feature>
<gene>
    <name evidence="1" type="primary">nagZ</name>
    <name type="ordered locus">MS0396</name>
</gene>
<protein>
    <recommendedName>
        <fullName evidence="1">Beta-hexosaminidase</fullName>
        <ecNumber evidence="1">3.2.1.52</ecNumber>
    </recommendedName>
    <alternativeName>
        <fullName evidence="1">Beta-N-acetylhexosaminidase</fullName>
    </alternativeName>
    <alternativeName>
        <fullName evidence="1">N-acetyl-beta-glucosaminidase</fullName>
    </alternativeName>
</protein>
<comment type="function">
    <text evidence="1">Plays a role in peptidoglycan recycling by cleaving the terminal beta-1,4-linked N-acetylglucosamine (GlcNAc) from peptide-linked peptidoglycan fragments, giving rise to free GlcNAc, anhydro-N-acetylmuramic acid and anhydro-N-acetylmuramic acid-linked peptides.</text>
</comment>
<comment type="catalytic activity">
    <reaction evidence="1">
        <text>Hydrolysis of terminal non-reducing N-acetyl-D-hexosamine residues in N-acetyl-beta-D-hexosaminides.</text>
        <dbReference type="EC" id="3.2.1.52"/>
    </reaction>
</comment>
<comment type="pathway">
    <text evidence="1">Cell wall biogenesis; peptidoglycan recycling.</text>
</comment>
<comment type="subcellular location">
    <subcellularLocation>
        <location evidence="1">Cytoplasm</location>
    </subcellularLocation>
</comment>
<comment type="similarity">
    <text evidence="1">Belongs to the glycosyl hydrolase 3 family. NagZ subfamily.</text>
</comment>
<reference key="1">
    <citation type="journal article" date="2004" name="Nat. Biotechnol.">
        <title>The genome sequence of the capnophilic rumen bacterium Mannheimia succiniciproducens.</title>
        <authorList>
            <person name="Hong S.H."/>
            <person name="Kim J.S."/>
            <person name="Lee S.Y."/>
            <person name="In Y.H."/>
            <person name="Choi S.S."/>
            <person name="Rih J.-K."/>
            <person name="Kim C.H."/>
            <person name="Jeong H."/>
            <person name="Hur C.G."/>
            <person name="Kim J.J."/>
        </authorList>
    </citation>
    <scope>NUCLEOTIDE SEQUENCE [LARGE SCALE GENOMIC DNA]</scope>
    <source>
        <strain>KCTC 0769BP / MBEL55E</strain>
    </source>
</reference>
<sequence length="347" mass="38847">MSTLLIDLKGQELLAEEAELLAHPLVAGLILFTRNFYDRSQIQALIKDIRRRVKKPLLITVDQEGGRVQRFREGFTQLPAMQSFAAMISDPALQLTTAKEAGWLMAAEMTALDIDLSFAPVLDLGHECKAIGDRSFCEEVEPAVRLASAFIDGMHQAGMATTGKHFPGHGHVLADSHLETPYDERPSAVIFERDIQPFQQLIAQNKLDAVMPAHVIYRHCDSQPASGSKYWLQDILRQKLGFDGTVFSDDLGMKGAGFMGDFVARSEKALSAGCDLLLLCNEPEGVVQVLDNLKLEENPPHFAARQRRLQSLFKKKAFSWNELTKTRRWLENSKKLTALQQSWLDSK</sequence>
<proteinExistence type="inferred from homology"/>
<keyword id="KW-0131">Cell cycle</keyword>
<keyword id="KW-0132">Cell division</keyword>
<keyword id="KW-0133">Cell shape</keyword>
<keyword id="KW-0961">Cell wall biogenesis/degradation</keyword>
<keyword id="KW-0963">Cytoplasm</keyword>
<keyword id="KW-0326">Glycosidase</keyword>
<keyword id="KW-0378">Hydrolase</keyword>
<keyword id="KW-0573">Peptidoglycan synthesis</keyword>
<name>NAGZ_MANSM</name>
<accession>Q65VK7</accession>